<feature type="signal peptide" evidence="2">
    <location>
        <begin position="1"/>
        <end position="23"/>
    </location>
</feature>
<feature type="chain" id="PRO_0000408914" description="Outer spore wall assembly protein SHE10">
    <location>
        <begin position="24"/>
        <end position="577"/>
    </location>
</feature>
<feature type="region of interest" description="Disordered" evidence="3">
    <location>
        <begin position="525"/>
        <end position="577"/>
    </location>
</feature>
<feature type="coiled-coil region" evidence="2">
    <location>
        <begin position="379"/>
        <end position="416"/>
    </location>
</feature>
<feature type="coiled-coil region" evidence="2">
    <location>
        <begin position="513"/>
        <end position="561"/>
    </location>
</feature>
<feature type="compositionally biased region" description="Basic and acidic residues" evidence="3">
    <location>
        <begin position="525"/>
        <end position="545"/>
    </location>
</feature>
<feature type="compositionally biased region" description="Low complexity" evidence="3">
    <location>
        <begin position="562"/>
        <end position="577"/>
    </location>
</feature>
<sequence>MGKLIKLITTLTVLVSLLQYCCEFNSGSISCERTQTLCHYTNPRVWNTYFSRNCELYKNKVSPGFDIVARKYDTAVKPVIDDATVKVNKAAIQPAFKVIHSQCKKWNCGKYYQLVRSPMVKTRRFFFAKYNAFVKPNLDKFFTAEFRSHLKERILKYKNIGHYYFTITSRCIKSKYDFTVGNTEEKLMGKFKNKDTHGIHGSVTREPSSEDMVLTVSTMESDEEELTTTSTQTVVETITLDQEEASAVANHAHDDEASTDVEGSTDVNVNEQALLQEDFDMWSETILQKTQDVIQLFEKDVSKYINGKLVEEANHFKAKFQSLDDKSKKFFSKISLAINDIECVEGIDSETGKKIFFDKSGSTEISQYITRELVREYFNETRSTLDELTNAMEKDLSEITDEIEKKVNAIREENVEVFEEWGDIIVNEWSKRMAYVDVINAHMGADDDTTLDEEKAKSSVNWKKFLKGKKQIIESRDKLAHHSADLSRVNAFRQKVQKKILSFTQESGEFLYILRSKANLQFQERERKERERKEREKAAAEEFQRQQELLRQQEEEDEEDVSYTSTSTITTTTTMTL</sequence>
<protein>
    <recommendedName>
        <fullName evidence="1">Outer spore wall assembly protein SHE10</fullName>
    </recommendedName>
    <alternativeName>
        <fullName evidence="1">Sensitivity to high expression protein 10</fullName>
    </alternativeName>
</protein>
<evidence type="ECO:0000250" key="1">
    <source>
        <dbReference type="UniProtKB" id="P53075"/>
    </source>
</evidence>
<evidence type="ECO:0000255" key="2"/>
<evidence type="ECO:0000256" key="3">
    <source>
        <dbReference type="SAM" id="MobiDB-lite"/>
    </source>
</evidence>
<evidence type="ECO:0000305" key="4"/>
<comment type="function">
    <text evidence="1">Involved in spore wall assembly. May be a component of the mitochondrial RNase MRP (MtMRP), a ribonucleoprotein endoribonuclease involved in the cleaving RNA transcripts to generate primers for DNA replication in mitochondria.</text>
</comment>
<comment type="subunit">
    <text evidence="1">Component of the mitochondria-localized RNase mitochondrial RNA-processing (RNase MRP) composed of one single RNA encoded by the NME1 gene and at least 31 proteins. Absent in the nucleus-localized RNase MRP (NuMRP).</text>
</comment>
<comment type="subcellular location">
    <subcellularLocation>
        <location evidence="1">Mitochondrion</location>
    </subcellularLocation>
</comment>
<comment type="similarity">
    <text evidence="4">Belongs to the SHE10 family.</text>
</comment>
<organism>
    <name type="scientific">Saccharomyces cerevisiae (strain Lalvin EC1118 / Prise de mousse)</name>
    <name type="common">Baker's yeast</name>
    <dbReference type="NCBI Taxonomy" id="643680"/>
    <lineage>
        <taxon>Eukaryota</taxon>
        <taxon>Fungi</taxon>
        <taxon>Dikarya</taxon>
        <taxon>Ascomycota</taxon>
        <taxon>Saccharomycotina</taxon>
        <taxon>Saccharomycetes</taxon>
        <taxon>Saccharomycetales</taxon>
        <taxon>Saccharomycetaceae</taxon>
        <taxon>Saccharomyces</taxon>
    </lineage>
</organism>
<keyword id="KW-0175">Coiled coil</keyword>
<keyword id="KW-0496">Mitochondrion</keyword>
<keyword id="KW-0687">Ribonucleoprotein</keyword>
<keyword id="KW-0732">Signal</keyword>
<keyword id="KW-0749">Sporulation</keyword>
<dbReference type="EMBL" id="FN393070">
    <property type="protein sequence ID" value="CAY79542.1"/>
    <property type="molecule type" value="Genomic_DNA"/>
</dbReference>
<dbReference type="SMR" id="C8Z826"/>
<dbReference type="HOGENOM" id="CLU_023952_1_0_1"/>
<dbReference type="OrthoDB" id="40211at4893"/>
<dbReference type="Proteomes" id="UP000000286">
    <property type="component" value="Chromosome VII, Scaffold EC1118_1G1"/>
</dbReference>
<dbReference type="GO" id="GO:0005739">
    <property type="term" value="C:mitochondrion"/>
    <property type="evidence" value="ECO:0007669"/>
    <property type="project" value="UniProtKB-SubCell"/>
</dbReference>
<dbReference type="GO" id="GO:1990904">
    <property type="term" value="C:ribonucleoprotein complex"/>
    <property type="evidence" value="ECO:0007669"/>
    <property type="project" value="UniProtKB-KW"/>
</dbReference>
<dbReference type="GO" id="GO:0030435">
    <property type="term" value="P:sporulation resulting in formation of a cellular spore"/>
    <property type="evidence" value="ECO:0007669"/>
    <property type="project" value="UniProtKB-KW"/>
</dbReference>
<proteinExistence type="inferred from homology"/>
<reference key="1">
    <citation type="journal article" date="2009" name="Proc. Natl. Acad. Sci. U.S.A.">
        <title>Eukaryote-to-eukaryote gene transfer events revealed by the genome sequence of the wine yeast Saccharomyces cerevisiae EC1118.</title>
        <authorList>
            <person name="Novo M."/>
            <person name="Bigey F."/>
            <person name="Beyne E."/>
            <person name="Galeote V."/>
            <person name="Gavory F."/>
            <person name="Mallet S."/>
            <person name="Cambon B."/>
            <person name="Legras J.-L."/>
            <person name="Wincker P."/>
            <person name="Casaregola S."/>
            <person name="Dequin S."/>
        </authorList>
    </citation>
    <scope>NUCLEOTIDE SEQUENCE [LARGE SCALE GENOMIC DNA]</scope>
    <source>
        <strain>Lalvin EC1118 / Prise de mousse</strain>
    </source>
</reference>
<accession>C8Z826</accession>
<gene>
    <name evidence="1" type="primary">SHE10</name>
    <name type="ORF">EC1118_1G1_0419g</name>
</gene>
<name>SHE10_YEAS8</name>